<gene>
    <name evidence="1" type="primary">pyrE</name>
    <name type="ordered locus">STK_14810</name>
</gene>
<protein>
    <recommendedName>
        <fullName evidence="1">Orotate phosphoribosyltransferase</fullName>
        <shortName evidence="1">OPRT</shortName>
        <shortName evidence="1">OPRTase</shortName>
        <ecNumber evidence="1">2.4.2.10</ecNumber>
    </recommendedName>
</protein>
<accession>Q970X1</accession>
<comment type="function">
    <text evidence="1">Catalyzes the transfer of a ribosyl phosphate group from 5-phosphoribose 1-diphosphate to orotate, leading to the formation of orotidine monophosphate (OMP).</text>
</comment>
<comment type="catalytic activity">
    <reaction evidence="1">
        <text>orotidine 5'-phosphate + diphosphate = orotate + 5-phospho-alpha-D-ribose 1-diphosphate</text>
        <dbReference type="Rhea" id="RHEA:10380"/>
        <dbReference type="ChEBI" id="CHEBI:30839"/>
        <dbReference type="ChEBI" id="CHEBI:33019"/>
        <dbReference type="ChEBI" id="CHEBI:57538"/>
        <dbReference type="ChEBI" id="CHEBI:58017"/>
        <dbReference type="EC" id="2.4.2.10"/>
    </reaction>
</comment>
<comment type="cofactor">
    <cofactor evidence="1">
        <name>Mg(2+)</name>
        <dbReference type="ChEBI" id="CHEBI:18420"/>
    </cofactor>
</comment>
<comment type="pathway">
    <text evidence="1">Pyrimidine metabolism; UMP biosynthesis via de novo pathway; UMP from orotate: step 1/2.</text>
</comment>
<comment type="subunit">
    <text evidence="1">Homodimer.</text>
</comment>
<comment type="similarity">
    <text evidence="1">Belongs to the purine/pyrimidine phosphoribosyltransferase family. PyrE subfamily.</text>
</comment>
<dbReference type="EC" id="2.4.2.10" evidence="1"/>
<dbReference type="EMBL" id="AB104901">
    <property type="protein sequence ID" value="BAD06523.1"/>
    <property type="molecule type" value="Genomic_DNA"/>
</dbReference>
<dbReference type="EMBL" id="BA000023">
    <property type="protein sequence ID" value="BAB66552.1"/>
    <property type="molecule type" value="Genomic_DNA"/>
</dbReference>
<dbReference type="RefSeq" id="WP_010979530.1">
    <property type="nucleotide sequence ID" value="NC_003106.2"/>
</dbReference>
<dbReference type="SMR" id="Q970X1"/>
<dbReference type="STRING" id="273063.STK_14810"/>
<dbReference type="GeneID" id="95642290"/>
<dbReference type="KEGG" id="sto:STK_14810"/>
<dbReference type="PATRIC" id="fig|273063.9.peg.1688"/>
<dbReference type="eggNOG" id="arCOG00029">
    <property type="taxonomic scope" value="Archaea"/>
</dbReference>
<dbReference type="OrthoDB" id="9089at2157"/>
<dbReference type="UniPathway" id="UPA00070">
    <property type="reaction ID" value="UER00119"/>
</dbReference>
<dbReference type="Proteomes" id="UP000001015">
    <property type="component" value="Chromosome"/>
</dbReference>
<dbReference type="GO" id="GO:0000287">
    <property type="term" value="F:magnesium ion binding"/>
    <property type="evidence" value="ECO:0007669"/>
    <property type="project" value="UniProtKB-UniRule"/>
</dbReference>
<dbReference type="GO" id="GO:0004588">
    <property type="term" value="F:orotate phosphoribosyltransferase activity"/>
    <property type="evidence" value="ECO:0007669"/>
    <property type="project" value="UniProtKB-UniRule"/>
</dbReference>
<dbReference type="GO" id="GO:0044205">
    <property type="term" value="P:'de novo' UMP biosynthetic process"/>
    <property type="evidence" value="ECO:0007669"/>
    <property type="project" value="UniProtKB-UniRule"/>
</dbReference>
<dbReference type="GO" id="GO:0019856">
    <property type="term" value="P:pyrimidine nucleobase biosynthetic process"/>
    <property type="evidence" value="ECO:0007669"/>
    <property type="project" value="TreeGrafter"/>
</dbReference>
<dbReference type="CDD" id="cd06223">
    <property type="entry name" value="PRTases_typeI"/>
    <property type="match status" value="1"/>
</dbReference>
<dbReference type="Gene3D" id="3.40.50.2020">
    <property type="match status" value="1"/>
</dbReference>
<dbReference type="HAMAP" id="MF_01208">
    <property type="entry name" value="PyrE"/>
    <property type="match status" value="1"/>
</dbReference>
<dbReference type="InterPro" id="IPR023031">
    <property type="entry name" value="OPRT"/>
</dbReference>
<dbReference type="InterPro" id="IPR004467">
    <property type="entry name" value="Or_phspho_trans_dom"/>
</dbReference>
<dbReference type="InterPro" id="IPR000836">
    <property type="entry name" value="PRibTrfase_dom"/>
</dbReference>
<dbReference type="InterPro" id="IPR029057">
    <property type="entry name" value="PRTase-like"/>
</dbReference>
<dbReference type="NCBIfam" id="TIGR00336">
    <property type="entry name" value="pyrE"/>
    <property type="match status" value="1"/>
</dbReference>
<dbReference type="PANTHER" id="PTHR19278">
    <property type="entry name" value="OROTATE PHOSPHORIBOSYLTRANSFERASE"/>
    <property type="match status" value="1"/>
</dbReference>
<dbReference type="PANTHER" id="PTHR19278:SF9">
    <property type="entry name" value="URIDINE 5'-MONOPHOSPHATE SYNTHASE"/>
    <property type="match status" value="1"/>
</dbReference>
<dbReference type="Pfam" id="PF00156">
    <property type="entry name" value="Pribosyltran"/>
    <property type="match status" value="1"/>
</dbReference>
<dbReference type="SUPFAM" id="SSF53271">
    <property type="entry name" value="PRTase-like"/>
    <property type="match status" value="1"/>
</dbReference>
<sequence length="195" mass="21714">MDFIKSLVENKLLLIGNFVLTSGKISPYYLDLRRLSNYYEIFSDTVNKAIDKIKNIDFDMIIGIATGGIPFASFISCRMGKPLGYIRMEKKGYGTDKILEADVSGRKILLVDDVATTGGSLSKAVEIINSEGGRVVASLVIVDREEGAEKKLGEYGVKLISVYKIREILEYLLNSSLISDNDKNNIKEYLVKNIE</sequence>
<feature type="chain" id="PRO_0000110791" description="Orotate phosphoribosyltransferase">
    <location>
        <begin position="1"/>
        <end position="195"/>
    </location>
</feature>
<feature type="binding site" evidence="1">
    <location>
        <position position="87"/>
    </location>
    <ligand>
        <name>5-phospho-alpha-D-ribose 1-diphosphate</name>
        <dbReference type="ChEBI" id="CHEBI:58017"/>
        <note>ligand shared between dimeric partners</note>
    </ligand>
</feature>
<feature type="binding site" evidence="1">
    <location>
        <position position="91"/>
    </location>
    <ligand>
        <name>5-phospho-alpha-D-ribose 1-diphosphate</name>
        <dbReference type="ChEBI" id="CHEBI:58017"/>
        <note>ligand shared between dimeric partners</note>
    </ligand>
</feature>
<feature type="binding site" description="in other chain" evidence="1">
    <location>
        <begin position="112"/>
        <end position="120"/>
    </location>
    <ligand>
        <name>5-phospho-alpha-D-ribose 1-diphosphate</name>
        <dbReference type="ChEBI" id="CHEBI:58017"/>
        <note>ligand shared between dimeric partners</note>
    </ligand>
</feature>
<feature type="binding site" evidence="1">
    <location>
        <position position="116"/>
    </location>
    <ligand>
        <name>orotate</name>
        <dbReference type="ChEBI" id="CHEBI:30839"/>
    </ligand>
</feature>
<feature type="binding site" evidence="1">
    <location>
        <position position="144"/>
    </location>
    <ligand>
        <name>orotate</name>
        <dbReference type="ChEBI" id="CHEBI:30839"/>
    </ligand>
</feature>
<evidence type="ECO:0000255" key="1">
    <source>
        <dbReference type="HAMAP-Rule" id="MF_01208"/>
    </source>
</evidence>
<proteinExistence type="inferred from homology"/>
<keyword id="KW-0328">Glycosyltransferase</keyword>
<keyword id="KW-0460">Magnesium</keyword>
<keyword id="KW-0665">Pyrimidine biosynthesis</keyword>
<keyword id="KW-1185">Reference proteome</keyword>
<keyword id="KW-0808">Transferase</keyword>
<organism>
    <name type="scientific">Sulfurisphaera tokodaii (strain DSM 16993 / JCM 10545 / NBRC 100140 / 7)</name>
    <name type="common">Sulfolobus tokodaii</name>
    <dbReference type="NCBI Taxonomy" id="273063"/>
    <lineage>
        <taxon>Archaea</taxon>
        <taxon>Thermoproteota</taxon>
        <taxon>Thermoprotei</taxon>
        <taxon>Sulfolobales</taxon>
        <taxon>Sulfolobaceae</taxon>
        <taxon>Sulfurisphaera</taxon>
    </lineage>
</organism>
<name>PYRE_SULTO</name>
<reference key="1">
    <citation type="submission" date="2003-03" db="EMBL/GenBank/DDBJ databases">
        <title>Orotate phosphoribosyltransferase gen (pyrE) from Sulfolobus tokodaii.</title>
        <authorList>
            <person name="Miyazaki K."/>
        </authorList>
    </citation>
    <scope>NUCLEOTIDE SEQUENCE [GENOMIC DNA]</scope>
    <source>
        <strain>DSM 16993 / JCM 10545 / NBRC 100140 / 7</strain>
    </source>
</reference>
<reference key="2">
    <citation type="journal article" date="2001" name="DNA Res.">
        <title>Complete genome sequence of an aerobic thermoacidophilic Crenarchaeon, Sulfolobus tokodaii strain7.</title>
        <authorList>
            <person name="Kawarabayasi Y."/>
            <person name="Hino Y."/>
            <person name="Horikawa H."/>
            <person name="Jin-no K."/>
            <person name="Takahashi M."/>
            <person name="Sekine M."/>
            <person name="Baba S."/>
            <person name="Ankai A."/>
            <person name="Kosugi H."/>
            <person name="Hosoyama A."/>
            <person name="Fukui S."/>
            <person name="Nagai Y."/>
            <person name="Nishijima K."/>
            <person name="Otsuka R."/>
            <person name="Nakazawa H."/>
            <person name="Takamiya M."/>
            <person name="Kato Y."/>
            <person name="Yoshizawa T."/>
            <person name="Tanaka T."/>
            <person name="Kudoh Y."/>
            <person name="Yamazaki J."/>
            <person name="Kushida N."/>
            <person name="Oguchi A."/>
            <person name="Aoki K."/>
            <person name="Masuda S."/>
            <person name="Yanagii M."/>
            <person name="Nishimura M."/>
            <person name="Yamagishi A."/>
            <person name="Oshima T."/>
            <person name="Kikuchi H."/>
        </authorList>
    </citation>
    <scope>NUCLEOTIDE SEQUENCE [LARGE SCALE GENOMIC DNA]</scope>
    <source>
        <strain>DSM 16993 / JCM 10545 / NBRC 100140 / 7</strain>
    </source>
</reference>